<name>SECG_PYRAR</name>
<keyword id="KW-1003">Cell membrane</keyword>
<keyword id="KW-0472">Membrane</keyword>
<keyword id="KW-0653">Protein transport</keyword>
<keyword id="KW-0811">Translocation</keyword>
<keyword id="KW-0812">Transmembrane</keyword>
<keyword id="KW-1133">Transmembrane helix</keyword>
<keyword id="KW-0813">Transport</keyword>
<reference key="1">
    <citation type="submission" date="2007-04" db="EMBL/GenBank/DDBJ databases">
        <title>Complete sequence of Pyrobaculum arsenaticum DSM 13514.</title>
        <authorList>
            <consortium name="US DOE Joint Genome Institute"/>
            <person name="Copeland A."/>
            <person name="Lucas S."/>
            <person name="Lapidus A."/>
            <person name="Barry K."/>
            <person name="Glavina del Rio T."/>
            <person name="Dalin E."/>
            <person name="Tice H."/>
            <person name="Pitluck S."/>
            <person name="Chain P."/>
            <person name="Malfatti S."/>
            <person name="Shin M."/>
            <person name="Vergez L."/>
            <person name="Schmutz J."/>
            <person name="Larimer F."/>
            <person name="Land M."/>
            <person name="Hauser L."/>
            <person name="Kyrpides N."/>
            <person name="Mikhailova N."/>
            <person name="Cozen A.E."/>
            <person name="Fitz-Gibbon S.T."/>
            <person name="House C.H."/>
            <person name="Saltikov C."/>
            <person name="Lowe T.M."/>
            <person name="Richardson P."/>
        </authorList>
    </citation>
    <scope>NUCLEOTIDE SEQUENCE [LARGE SCALE GENOMIC DNA]</scope>
    <source>
        <strain>ATCC 700994 / DSM 13514 / JCM 11321 / PZ6</strain>
    </source>
</reference>
<evidence type="ECO:0000255" key="1">
    <source>
        <dbReference type="HAMAP-Rule" id="MF_00751"/>
    </source>
</evidence>
<gene>
    <name evidence="1" type="primary">secG</name>
    <name type="ordered locus">Pars_1493</name>
</gene>
<organism>
    <name type="scientific">Pyrobaculum arsenaticum (strain DSM 13514 / JCM 11321 / PZ6)</name>
    <dbReference type="NCBI Taxonomy" id="340102"/>
    <lineage>
        <taxon>Archaea</taxon>
        <taxon>Thermoproteota</taxon>
        <taxon>Thermoprotei</taxon>
        <taxon>Thermoproteales</taxon>
        <taxon>Thermoproteaceae</taxon>
        <taxon>Pyrobaculum</taxon>
    </lineage>
</organism>
<feature type="chain" id="PRO_1000046580" description="Preprotein translocase subunit SecG">
    <location>
        <begin position="1"/>
        <end position="58"/>
    </location>
</feature>
<feature type="topological domain" description="Cytoplasmic" evidence="1">
    <location>
        <begin position="1"/>
        <end position="33"/>
    </location>
</feature>
<feature type="transmembrane region" description="Helical" evidence="1">
    <location>
        <begin position="34"/>
        <end position="55"/>
    </location>
</feature>
<feature type="topological domain" description="Extracellular" evidence="1">
    <location>
        <begin position="56"/>
        <end position="58"/>
    </location>
</feature>
<dbReference type="EMBL" id="CP000660">
    <property type="protein sequence ID" value="ABP51049.1"/>
    <property type="molecule type" value="Genomic_DNA"/>
</dbReference>
<dbReference type="SMR" id="A4WKY2"/>
<dbReference type="KEGG" id="pas:Pars_1493"/>
<dbReference type="HOGENOM" id="CLU_208205_2_1_2"/>
<dbReference type="OrthoDB" id="28749at2157"/>
<dbReference type="Proteomes" id="UP000001567">
    <property type="component" value="Chromosome"/>
</dbReference>
<dbReference type="GO" id="GO:0005886">
    <property type="term" value="C:plasma membrane"/>
    <property type="evidence" value="ECO:0007669"/>
    <property type="project" value="UniProtKB-SubCell"/>
</dbReference>
<dbReference type="GO" id="GO:0015031">
    <property type="term" value="P:protein transport"/>
    <property type="evidence" value="ECO:0007669"/>
    <property type="project" value="UniProtKB-UniRule"/>
</dbReference>
<dbReference type="HAMAP" id="MF_00751">
    <property type="entry name" value="SecG"/>
    <property type="match status" value="1"/>
</dbReference>
<dbReference type="InterPro" id="IPR023531">
    <property type="entry name" value="Preprot_translocase_SecG"/>
</dbReference>
<dbReference type="InterPro" id="IPR016482">
    <property type="entry name" value="SecG/Sec61-beta/Sbh"/>
</dbReference>
<dbReference type="NCBIfam" id="NF002318">
    <property type="entry name" value="PRK01253.1"/>
    <property type="match status" value="1"/>
</dbReference>
<dbReference type="Pfam" id="PF03911">
    <property type="entry name" value="Sec61_beta"/>
    <property type="match status" value="1"/>
</dbReference>
<proteinExistence type="inferred from homology"/>
<comment type="function">
    <text evidence="1">Involved in protein export. The function of the beta subunit is unknown, but it may be involved in stabilization of the trimeric complex.</text>
</comment>
<comment type="subunit">
    <text evidence="1">Component of the protein translocase complex. Heterotrimer consisting of alpha (SecY), beta (SecG) and gamma (SecE) subunits. Can form oligomers of the heterotrimer.</text>
</comment>
<comment type="subcellular location">
    <subcellularLocation>
        <location evidence="1">Cell membrane</location>
        <topology evidence="1">Single-pass membrane protein</topology>
    </subcellularLocation>
</comment>
<comment type="similarity">
    <text evidence="1">Belongs to the SEC61-beta family.</text>
</comment>
<accession>A4WKY2</accession>
<sequence length="58" mass="6262">MARRKKYEGLNPFVAAGLIKFSEEGEMERIKLSPKAAIAVSAAIIAALIIINLLLPPL</sequence>
<protein>
    <recommendedName>
        <fullName evidence="1">Preprotein translocase subunit SecG</fullName>
    </recommendedName>
    <alternativeName>
        <fullName evidence="1">Protein transport protein Sec61 subunit beta homolog</fullName>
    </alternativeName>
</protein>